<accession>B1YLS4</accession>
<name>TRPB_EXIS2</name>
<protein>
    <recommendedName>
        <fullName evidence="1">Tryptophan synthase beta chain</fullName>
        <ecNumber evidence="1">4.2.1.20</ecNumber>
    </recommendedName>
</protein>
<sequence length="399" mass="43691">MTRYSQPDALGQYGIYGGRYIPETLMQAVLELEQAYAEVKEDPAFRERMNDLLENYVGRQTPLYYAEHLTRTIGGAKIYLKREDLNHTGAHKINNTIGQALLAERMGKRKIVAETGAGQHGVATATVCALLDLECVIFMGEEDIRRQELNVFRMELLGAKVVSVTQGSRTLKDAVNEALRYWVKHVDDTHYLMGSVLGPHPFPEIVRDFQAVIGQETRTQILEKEGKLPEAIVACVGGGSNAIGMFHPFIDDEEVALYGIEAAGSGLETEKHAATMSKGEVGVLHGSMMYLLQDEHGQVTEAHSISAGLDYPGVGPEHSLLKDIGRVQYEAVTDQQALDALQLLCQKEGIIPALESAHAVAHAKELARGMQPEEVVVICLSGRGDKDVMTVRNALKGEA</sequence>
<organism>
    <name type="scientific">Exiguobacterium sibiricum (strain DSM 17290 / CCUG 55495 / CIP 109462 / JCM 13490 / 255-15)</name>
    <dbReference type="NCBI Taxonomy" id="262543"/>
    <lineage>
        <taxon>Bacteria</taxon>
        <taxon>Bacillati</taxon>
        <taxon>Bacillota</taxon>
        <taxon>Bacilli</taxon>
        <taxon>Bacillales</taxon>
        <taxon>Bacillales Family XII. Incertae Sedis</taxon>
        <taxon>Exiguobacterium</taxon>
    </lineage>
</organism>
<proteinExistence type="inferred from homology"/>
<gene>
    <name evidence="1" type="primary">trpB</name>
    <name type="ordered locus">Exig_0927</name>
</gene>
<evidence type="ECO:0000255" key="1">
    <source>
        <dbReference type="HAMAP-Rule" id="MF_00133"/>
    </source>
</evidence>
<reference key="1">
    <citation type="submission" date="2008-04" db="EMBL/GenBank/DDBJ databases">
        <title>Complete sequence of chromosome of Exiguobacterium sibiricum 255-15.</title>
        <authorList>
            <consortium name="US DOE Joint Genome Institute"/>
            <person name="Copeland A."/>
            <person name="Lucas S."/>
            <person name="Lapidus A."/>
            <person name="Glavina del Rio T."/>
            <person name="Dalin E."/>
            <person name="Tice H."/>
            <person name="Bruce D."/>
            <person name="Goodwin L."/>
            <person name="Pitluck S."/>
            <person name="Kiss H."/>
            <person name="Chertkov O."/>
            <person name="Monk C."/>
            <person name="Brettin T."/>
            <person name="Detter J.C."/>
            <person name="Han C."/>
            <person name="Kuske C.R."/>
            <person name="Schmutz J."/>
            <person name="Larimer F."/>
            <person name="Land M."/>
            <person name="Hauser L."/>
            <person name="Kyrpides N."/>
            <person name="Mikhailova N."/>
            <person name="Vishnivetskaya T."/>
            <person name="Rodrigues D.F."/>
            <person name="Gilichinsky D."/>
            <person name="Tiedje J."/>
            <person name="Richardson P."/>
        </authorList>
    </citation>
    <scope>NUCLEOTIDE SEQUENCE [LARGE SCALE GENOMIC DNA]</scope>
    <source>
        <strain>DSM 17290 / CCUG 55495 / CIP 109462 / JCM 13490 / 255-15</strain>
    </source>
</reference>
<comment type="function">
    <text evidence="1">The beta subunit is responsible for the synthesis of L-tryptophan from indole and L-serine.</text>
</comment>
<comment type="catalytic activity">
    <reaction evidence="1">
        <text>(1S,2R)-1-C-(indol-3-yl)glycerol 3-phosphate + L-serine = D-glyceraldehyde 3-phosphate + L-tryptophan + H2O</text>
        <dbReference type="Rhea" id="RHEA:10532"/>
        <dbReference type="ChEBI" id="CHEBI:15377"/>
        <dbReference type="ChEBI" id="CHEBI:33384"/>
        <dbReference type="ChEBI" id="CHEBI:57912"/>
        <dbReference type="ChEBI" id="CHEBI:58866"/>
        <dbReference type="ChEBI" id="CHEBI:59776"/>
        <dbReference type="EC" id="4.2.1.20"/>
    </reaction>
</comment>
<comment type="cofactor">
    <cofactor evidence="1">
        <name>pyridoxal 5'-phosphate</name>
        <dbReference type="ChEBI" id="CHEBI:597326"/>
    </cofactor>
</comment>
<comment type="pathway">
    <text evidence="1">Amino-acid biosynthesis; L-tryptophan biosynthesis; L-tryptophan from chorismate: step 5/5.</text>
</comment>
<comment type="subunit">
    <text evidence="1">Tetramer of two alpha and two beta chains.</text>
</comment>
<comment type="similarity">
    <text evidence="1">Belongs to the TrpB family.</text>
</comment>
<feature type="chain" id="PRO_1000095789" description="Tryptophan synthase beta chain">
    <location>
        <begin position="1"/>
        <end position="399"/>
    </location>
</feature>
<feature type="modified residue" description="N6-(pyridoxal phosphate)lysine" evidence="1">
    <location>
        <position position="92"/>
    </location>
</feature>
<dbReference type="EC" id="4.2.1.20" evidence="1"/>
<dbReference type="EMBL" id="CP001022">
    <property type="protein sequence ID" value="ACB60407.1"/>
    <property type="molecule type" value="Genomic_DNA"/>
</dbReference>
<dbReference type="RefSeq" id="WP_012369831.1">
    <property type="nucleotide sequence ID" value="NC_010556.1"/>
</dbReference>
<dbReference type="SMR" id="B1YLS4"/>
<dbReference type="STRING" id="262543.Exig_0927"/>
<dbReference type="KEGG" id="esi:Exig_0927"/>
<dbReference type="eggNOG" id="COG0133">
    <property type="taxonomic scope" value="Bacteria"/>
</dbReference>
<dbReference type="HOGENOM" id="CLU_016734_3_1_9"/>
<dbReference type="OrthoDB" id="9766131at2"/>
<dbReference type="UniPathway" id="UPA00035">
    <property type="reaction ID" value="UER00044"/>
</dbReference>
<dbReference type="Proteomes" id="UP000001681">
    <property type="component" value="Chromosome"/>
</dbReference>
<dbReference type="GO" id="GO:0005737">
    <property type="term" value="C:cytoplasm"/>
    <property type="evidence" value="ECO:0007669"/>
    <property type="project" value="TreeGrafter"/>
</dbReference>
<dbReference type="GO" id="GO:0004834">
    <property type="term" value="F:tryptophan synthase activity"/>
    <property type="evidence" value="ECO:0007669"/>
    <property type="project" value="UniProtKB-UniRule"/>
</dbReference>
<dbReference type="CDD" id="cd06446">
    <property type="entry name" value="Trp-synth_B"/>
    <property type="match status" value="1"/>
</dbReference>
<dbReference type="FunFam" id="3.40.50.1100:FF:000001">
    <property type="entry name" value="Tryptophan synthase beta chain"/>
    <property type="match status" value="1"/>
</dbReference>
<dbReference type="FunFam" id="3.40.50.1100:FF:000004">
    <property type="entry name" value="Tryptophan synthase beta chain"/>
    <property type="match status" value="1"/>
</dbReference>
<dbReference type="Gene3D" id="3.40.50.1100">
    <property type="match status" value="2"/>
</dbReference>
<dbReference type="HAMAP" id="MF_00133">
    <property type="entry name" value="Trp_synth_beta"/>
    <property type="match status" value="1"/>
</dbReference>
<dbReference type="InterPro" id="IPR006653">
    <property type="entry name" value="Trp_synth_b_CS"/>
</dbReference>
<dbReference type="InterPro" id="IPR006654">
    <property type="entry name" value="Trp_synth_beta"/>
</dbReference>
<dbReference type="InterPro" id="IPR023026">
    <property type="entry name" value="Trp_synth_beta/beta-like"/>
</dbReference>
<dbReference type="InterPro" id="IPR001926">
    <property type="entry name" value="TrpB-like_PALP"/>
</dbReference>
<dbReference type="InterPro" id="IPR036052">
    <property type="entry name" value="TrpB-like_PALP_sf"/>
</dbReference>
<dbReference type="NCBIfam" id="TIGR00263">
    <property type="entry name" value="trpB"/>
    <property type="match status" value="1"/>
</dbReference>
<dbReference type="PANTHER" id="PTHR48077:SF3">
    <property type="entry name" value="TRYPTOPHAN SYNTHASE"/>
    <property type="match status" value="1"/>
</dbReference>
<dbReference type="PANTHER" id="PTHR48077">
    <property type="entry name" value="TRYPTOPHAN SYNTHASE-RELATED"/>
    <property type="match status" value="1"/>
</dbReference>
<dbReference type="Pfam" id="PF00291">
    <property type="entry name" value="PALP"/>
    <property type="match status" value="1"/>
</dbReference>
<dbReference type="PIRSF" id="PIRSF001413">
    <property type="entry name" value="Trp_syn_beta"/>
    <property type="match status" value="1"/>
</dbReference>
<dbReference type="SUPFAM" id="SSF53686">
    <property type="entry name" value="Tryptophan synthase beta subunit-like PLP-dependent enzymes"/>
    <property type="match status" value="1"/>
</dbReference>
<dbReference type="PROSITE" id="PS00168">
    <property type="entry name" value="TRP_SYNTHASE_BETA"/>
    <property type="match status" value="1"/>
</dbReference>
<keyword id="KW-0028">Amino-acid biosynthesis</keyword>
<keyword id="KW-0057">Aromatic amino acid biosynthesis</keyword>
<keyword id="KW-0456">Lyase</keyword>
<keyword id="KW-0663">Pyridoxal phosphate</keyword>
<keyword id="KW-1185">Reference proteome</keyword>
<keyword id="KW-0822">Tryptophan biosynthesis</keyword>